<comment type="function">
    <text evidence="1">Involved in the third step of the chorismate pathway, which leads to the biosynthesis of aromatic amino acids. Catalyzes the cis-dehydration of 3-dehydroquinate (DHQ) and introduces the first double bond of the aromatic ring to yield 3-dehydroshikimate.</text>
</comment>
<comment type="catalytic activity">
    <reaction evidence="1">
        <text>3-dehydroquinate = 3-dehydroshikimate + H2O</text>
        <dbReference type="Rhea" id="RHEA:21096"/>
        <dbReference type="ChEBI" id="CHEBI:15377"/>
        <dbReference type="ChEBI" id="CHEBI:16630"/>
        <dbReference type="ChEBI" id="CHEBI:32364"/>
        <dbReference type="EC" id="4.2.1.10"/>
    </reaction>
</comment>
<comment type="pathway">
    <text evidence="1">Metabolic intermediate biosynthesis; chorismate biosynthesis; chorismate from D-erythrose 4-phosphate and phosphoenolpyruvate: step 3/7.</text>
</comment>
<comment type="subunit">
    <text evidence="1">Homodimer.</text>
</comment>
<comment type="similarity">
    <text evidence="1">Belongs to the type-I 3-dehydroquinase family.</text>
</comment>
<proteinExistence type="inferred from homology"/>
<keyword id="KW-0028">Amino-acid biosynthesis</keyword>
<keyword id="KW-0057">Aromatic amino acid biosynthesis</keyword>
<keyword id="KW-0456">Lyase</keyword>
<keyword id="KW-0704">Schiff base</keyword>
<evidence type="ECO:0000255" key="1">
    <source>
        <dbReference type="HAMAP-Rule" id="MF_00214"/>
    </source>
</evidence>
<dbReference type="EC" id="4.2.1.10" evidence="1"/>
<dbReference type="EMBL" id="CP000733">
    <property type="protein sequence ID" value="ABS78406.1"/>
    <property type="molecule type" value="Genomic_DNA"/>
</dbReference>
<dbReference type="RefSeq" id="WP_005772174.1">
    <property type="nucleotide sequence ID" value="NC_009727.1"/>
</dbReference>
<dbReference type="SMR" id="A9KDC5"/>
<dbReference type="KEGG" id="cbd:CBUD_2171"/>
<dbReference type="HOGENOM" id="CLU_064444_2_1_6"/>
<dbReference type="UniPathway" id="UPA00053">
    <property type="reaction ID" value="UER00086"/>
</dbReference>
<dbReference type="Proteomes" id="UP000008555">
    <property type="component" value="Chromosome"/>
</dbReference>
<dbReference type="GO" id="GO:0003855">
    <property type="term" value="F:3-dehydroquinate dehydratase activity"/>
    <property type="evidence" value="ECO:0007669"/>
    <property type="project" value="UniProtKB-UniRule"/>
</dbReference>
<dbReference type="GO" id="GO:0046279">
    <property type="term" value="P:3,4-dihydroxybenzoate biosynthetic process"/>
    <property type="evidence" value="ECO:0007669"/>
    <property type="project" value="TreeGrafter"/>
</dbReference>
<dbReference type="GO" id="GO:0008652">
    <property type="term" value="P:amino acid biosynthetic process"/>
    <property type="evidence" value="ECO:0007669"/>
    <property type="project" value="UniProtKB-KW"/>
</dbReference>
<dbReference type="GO" id="GO:0009073">
    <property type="term" value="P:aromatic amino acid family biosynthetic process"/>
    <property type="evidence" value="ECO:0007669"/>
    <property type="project" value="UniProtKB-KW"/>
</dbReference>
<dbReference type="GO" id="GO:0009423">
    <property type="term" value="P:chorismate biosynthetic process"/>
    <property type="evidence" value="ECO:0007669"/>
    <property type="project" value="UniProtKB-UniRule"/>
</dbReference>
<dbReference type="CDD" id="cd00502">
    <property type="entry name" value="DHQase_I"/>
    <property type="match status" value="1"/>
</dbReference>
<dbReference type="FunFam" id="3.20.20.70:FF:000290">
    <property type="entry name" value="3-dehydroquinate dehydratase"/>
    <property type="match status" value="1"/>
</dbReference>
<dbReference type="Gene3D" id="3.20.20.70">
    <property type="entry name" value="Aldolase class I"/>
    <property type="match status" value="1"/>
</dbReference>
<dbReference type="HAMAP" id="MF_00214">
    <property type="entry name" value="AroD"/>
    <property type="match status" value="1"/>
</dbReference>
<dbReference type="InterPro" id="IPR013785">
    <property type="entry name" value="Aldolase_TIM"/>
</dbReference>
<dbReference type="InterPro" id="IPR001381">
    <property type="entry name" value="DHquinase_I"/>
</dbReference>
<dbReference type="InterPro" id="IPR050146">
    <property type="entry name" value="Type-I_3-dehydroquinase"/>
</dbReference>
<dbReference type="NCBIfam" id="TIGR01093">
    <property type="entry name" value="aroD"/>
    <property type="match status" value="1"/>
</dbReference>
<dbReference type="PANTHER" id="PTHR43699">
    <property type="entry name" value="3-DEHYDROQUINATE DEHYDRATASE"/>
    <property type="match status" value="1"/>
</dbReference>
<dbReference type="PANTHER" id="PTHR43699:SF1">
    <property type="entry name" value="3-DEHYDROQUINATE DEHYDRATASE"/>
    <property type="match status" value="1"/>
</dbReference>
<dbReference type="Pfam" id="PF01487">
    <property type="entry name" value="DHquinase_I"/>
    <property type="match status" value="1"/>
</dbReference>
<dbReference type="SUPFAM" id="SSF51569">
    <property type="entry name" value="Aldolase"/>
    <property type="match status" value="1"/>
</dbReference>
<feature type="chain" id="PRO_1000078043" description="3-dehydroquinate dehydratase">
    <location>
        <begin position="1"/>
        <end position="233"/>
    </location>
</feature>
<feature type="active site" description="Proton donor/acceptor" evidence="1">
    <location>
        <position position="118"/>
    </location>
</feature>
<feature type="active site" description="Schiff-base intermediate with substrate" evidence="1">
    <location>
        <position position="145"/>
    </location>
</feature>
<feature type="binding site" evidence="1">
    <location>
        <begin position="34"/>
        <end position="36"/>
    </location>
    <ligand>
        <name>3-dehydroquinate</name>
        <dbReference type="ChEBI" id="CHEBI:32364"/>
    </ligand>
</feature>
<feature type="binding site" evidence="1">
    <location>
        <position position="64"/>
    </location>
    <ligand>
        <name>3-dehydroquinate</name>
        <dbReference type="ChEBI" id="CHEBI:32364"/>
    </ligand>
</feature>
<feature type="binding site" evidence="1">
    <location>
        <position position="185"/>
    </location>
    <ligand>
        <name>3-dehydroquinate</name>
        <dbReference type="ChEBI" id="CHEBI:32364"/>
    </ligand>
</feature>
<feature type="binding site" evidence="1">
    <location>
        <position position="205"/>
    </location>
    <ligand>
        <name>3-dehydroquinate</name>
        <dbReference type="ChEBI" id="CHEBI:32364"/>
    </ligand>
</feature>
<feature type="binding site" evidence="1">
    <location>
        <position position="209"/>
    </location>
    <ligand>
        <name>3-dehydroquinate</name>
        <dbReference type="ChEBI" id="CHEBI:32364"/>
    </ligand>
</feature>
<name>AROD_COXBN</name>
<gene>
    <name evidence="1" type="primary">aroD</name>
    <name type="ordered locus">CBUD_2171</name>
</gene>
<sequence>MLNTPRICVVVIGKTLEEFLSQLEAAQTAVDFVELRIDYLEQINPNWVRIIKNHTHKKAILCCRARADGGKFLGTPEAQQEILQAGNDLGFDYLDIDLPVANKISIHEKKAKIIISYHNFLHTPPITELNFLLENMRLFNPDVFKFATKSEQYEDVKTLFKLLINKKNNENMIVLGMGEQGKIIRLLSPLLGGYLTFSSINGAISAPGQIDFKTMQDFYQRFYKISSPLKGED</sequence>
<reference key="1">
    <citation type="journal article" date="2009" name="Infect. Immun.">
        <title>Comparative genomics reveal extensive transposon-mediated genomic plasticity and diversity among potential effector proteins within the genus Coxiella.</title>
        <authorList>
            <person name="Beare P.A."/>
            <person name="Unsworth N."/>
            <person name="Andoh M."/>
            <person name="Voth D.E."/>
            <person name="Omsland A."/>
            <person name="Gilk S.D."/>
            <person name="Williams K.P."/>
            <person name="Sobral B.W."/>
            <person name="Kupko J.J. III"/>
            <person name="Porcella S.F."/>
            <person name="Samuel J.E."/>
            <person name="Heinzen R.A."/>
        </authorList>
    </citation>
    <scope>NUCLEOTIDE SEQUENCE [LARGE SCALE GENOMIC DNA]</scope>
    <source>
        <strain>Dugway 5J108-111</strain>
    </source>
</reference>
<organism>
    <name type="scientific">Coxiella burnetii (strain Dugway 5J108-111)</name>
    <dbReference type="NCBI Taxonomy" id="434922"/>
    <lineage>
        <taxon>Bacteria</taxon>
        <taxon>Pseudomonadati</taxon>
        <taxon>Pseudomonadota</taxon>
        <taxon>Gammaproteobacteria</taxon>
        <taxon>Legionellales</taxon>
        <taxon>Coxiellaceae</taxon>
        <taxon>Coxiella</taxon>
    </lineage>
</organism>
<accession>A9KDC5</accession>
<protein>
    <recommendedName>
        <fullName evidence="1">3-dehydroquinate dehydratase</fullName>
        <shortName evidence="1">3-dehydroquinase</shortName>
        <ecNumber evidence="1">4.2.1.10</ecNumber>
    </recommendedName>
    <alternativeName>
        <fullName evidence="1">Type I DHQase</fullName>
    </alternativeName>
    <alternativeName>
        <fullName evidence="1">Type I dehydroquinase</fullName>
        <shortName evidence="1">DHQ1</shortName>
    </alternativeName>
</protein>